<protein>
    <recommendedName>
        <fullName evidence="3">Lantipeptide Flvbeta.h</fullName>
    </recommendedName>
</protein>
<dbReference type="GO" id="GO:0005576">
    <property type="term" value="C:extracellular region"/>
    <property type="evidence" value="ECO:0007669"/>
    <property type="project" value="UniProtKB-SubCell"/>
</dbReference>
<proteinExistence type="inferred from homology"/>
<comment type="function">
    <text evidence="1 2">Lanthionine-containing peptide that does probably not show antibacterial activity, since its analog [+2]Flvbeta.h does not show antibacterial activity against M.luteus (PubMed:27028884). Also does not show antibiotic activity when tested with [Del2]Flvalpha.a, an analog of Flvalpha.a, which is encoded by the same operon than Flvbeta.h (PubMed:27028884). The bactericidal activity of lantibiotics is based on depolarization of energized bacterial cytoplasmic membranes, initiated by the formation of aqueous transmembrane pores (By similarity).</text>
</comment>
<comment type="subcellular location">
    <subcellularLocation>
        <location evidence="4">Secreted</location>
    </subcellularLocation>
</comment>
<comment type="PTM">
    <text evidence="2">Contains LL-lanthionine, DL-lanthionine, and DL-beta-methyllanthionine, when coepressed in E.coli with the flavecin synthetase FlvM2.</text>
</comment>
<sequence>MERYGHLAGVIPVDEIDDMFESNVIGGTSSIDCVRLASNTPEGTVNLTVRIEFCPSAACTYSCRL</sequence>
<feature type="propeptide" id="PRO_0000450410" description="Cleaved by FlvT" evidence="5">
    <location>
        <begin position="1"/>
        <end position="27"/>
    </location>
</feature>
<feature type="peptide" id="PRO_0000450411" description="Lantipeptide Flvbeta.h" evidence="5">
    <location>
        <begin position="28"/>
        <end position="65"/>
    </location>
</feature>
<feature type="modified residue" description="2,3-didehydrobutyrine; by FlvM2" evidence="5">
    <location>
        <position position="28"/>
    </location>
</feature>
<feature type="modified residue" description="2,3-didehydroalanine (Ser); by FlvM2" evidence="5">
    <location>
        <position position="30"/>
    </location>
</feature>
<feature type="modified residue" description="2,3-didehydrobutyrine; by FlvM2" evidence="5">
    <location>
        <position position="44"/>
    </location>
</feature>
<feature type="cross-link" description="Lanthionine (Ser-Cys); by FlvM2" evidence="5">
    <location>
        <begin position="29"/>
        <end position="33"/>
    </location>
</feature>
<feature type="cross-link" description="Beta-methyllanthionine (Thr-Cys); by FlvM2" evidence="5">
    <location>
        <begin position="48"/>
        <end position="54"/>
    </location>
</feature>
<feature type="cross-link" description="Lanthionine (Ser-Cys); by FlvM2" evidence="5">
    <location>
        <begin position="56"/>
        <end position="59"/>
    </location>
</feature>
<feature type="cross-link" description="Beta-methyllanthionine (Thr-Cys); by FlvM2" evidence="5">
    <location>
        <begin position="60"/>
        <end position="63"/>
    </location>
</feature>
<keyword id="KW-0964">Secreted</keyword>
<keyword id="KW-0883">Thioether bond</keyword>
<evidence type="ECO:0000250" key="1">
    <source>
        <dbReference type="UniProtKB" id="P86475"/>
    </source>
</evidence>
<evidence type="ECO:0000269" key="2">
    <source>
    </source>
</evidence>
<evidence type="ECO:0000303" key="3">
    <source>
    </source>
</evidence>
<evidence type="ECO:0000305" key="4"/>
<evidence type="ECO:0000305" key="5">
    <source>
    </source>
</evidence>
<name>LAN2H_RUMFL</name>
<accession>P0DQM0</accession>
<reference key="1">
    <citation type="journal article" date="2016" name="Cell Chem. Biol.">
        <title>Structural characterization and bioactivity analysis of the two-component lantibiotic Flv system from a ruminant bacterium.</title>
        <authorList>
            <person name="Zhao X."/>
            <person name="van der Donk W.A."/>
        </authorList>
    </citation>
    <scope>NUCLEOTIDE SEQUENCE [GENOMIC DNA]</scope>
    <scope>EXPRESSION IN E.COLI</scope>
    <scope>DEHYDRATION AT THR-28; SER-30 AND THR-44</scope>
    <scope>LANTHIONINE AND METHYLLANTHIONINE CROSS-LINKS</scope>
    <source>
        <strain>FD-1</strain>
    </source>
</reference>
<gene>
    <name evidence="3" type="primary">FlvA2.h</name>
</gene>
<organism>
    <name type="scientific">Ruminococcus flavefaciens</name>
    <dbReference type="NCBI Taxonomy" id="1265"/>
    <lineage>
        <taxon>Bacteria</taxon>
        <taxon>Bacillati</taxon>
        <taxon>Bacillota</taxon>
        <taxon>Clostridia</taxon>
        <taxon>Eubacteriales</taxon>
        <taxon>Oscillospiraceae</taxon>
        <taxon>Ruminococcus</taxon>
    </lineage>
</organism>